<gene>
    <name type="primary">SGR2</name>
    <name type="ordered locus">At1g31480</name>
    <name type="ORF">F27M3.29</name>
    <name type="ORF">T8E3.1</name>
</gene>
<name>SHGR2_ARATH</name>
<organism>
    <name type="scientific">Arabidopsis thaliana</name>
    <name type="common">Mouse-ear cress</name>
    <dbReference type="NCBI Taxonomy" id="3702"/>
    <lineage>
        <taxon>Eukaryota</taxon>
        <taxon>Viridiplantae</taxon>
        <taxon>Streptophyta</taxon>
        <taxon>Embryophyta</taxon>
        <taxon>Tracheophyta</taxon>
        <taxon>Spermatophyta</taxon>
        <taxon>Magnoliopsida</taxon>
        <taxon>eudicotyledons</taxon>
        <taxon>Gunneridae</taxon>
        <taxon>Pentapetalae</taxon>
        <taxon>rosids</taxon>
        <taxon>malvids</taxon>
        <taxon>Brassicales</taxon>
        <taxon>Brassicaceae</taxon>
        <taxon>Camelineae</taxon>
        <taxon>Arabidopsis</taxon>
    </lineage>
</organism>
<accession>Q8W5R2</accession>
<accession>Q9C6U4</accession>
<accession>Q9C861</accession>
<proteinExistence type="evidence at protein level"/>
<protein>
    <recommendedName>
        <fullName>Phospholipase SGR2</fullName>
        <ecNumber>3.1.1.-</ecNumber>
    </recommendedName>
    <alternativeName>
        <fullName>Protein SHOOT GRAVITROPISM 2</fullName>
    </alternativeName>
</protein>
<reference key="1">
    <citation type="journal article" date="2002" name="Plant Cell">
        <title>SGR2, a phospholipase-like protein, and ZIG/SGR4, a SNARE, are involved in the shoot gravitropism of Arabidopsis.</title>
        <authorList>
            <person name="Kato T."/>
            <person name="Morita M.T."/>
            <person name="Fukaki H."/>
            <person name="Yamauchi Y."/>
            <person name="Uehara M."/>
            <person name="Niihama M."/>
            <person name="Tasaka M."/>
        </authorList>
    </citation>
    <scope>NUCLEOTIDE SEQUENCE [MRNA]</scope>
    <scope>FUNCTION</scope>
    <scope>DISRUPTION PHENOTYPE</scope>
    <scope>MUTAGENESIS OF GLY-320 AND GLY-446</scope>
    <scope>TISSUE SPECIFICITY</scope>
    <source>
        <strain>cv. Columbia</strain>
    </source>
</reference>
<reference key="2">
    <citation type="journal article" date="2000" name="Nature">
        <title>Sequence and analysis of chromosome 1 of the plant Arabidopsis thaliana.</title>
        <authorList>
            <person name="Theologis A."/>
            <person name="Ecker J.R."/>
            <person name="Palm C.J."/>
            <person name="Federspiel N.A."/>
            <person name="Kaul S."/>
            <person name="White O."/>
            <person name="Alonso J."/>
            <person name="Altafi H."/>
            <person name="Araujo R."/>
            <person name="Bowman C.L."/>
            <person name="Brooks S.Y."/>
            <person name="Buehler E."/>
            <person name="Chan A."/>
            <person name="Chao Q."/>
            <person name="Chen H."/>
            <person name="Cheuk R.F."/>
            <person name="Chin C.W."/>
            <person name="Chung M.K."/>
            <person name="Conn L."/>
            <person name="Conway A.B."/>
            <person name="Conway A.R."/>
            <person name="Creasy T.H."/>
            <person name="Dewar K."/>
            <person name="Dunn P."/>
            <person name="Etgu P."/>
            <person name="Feldblyum T.V."/>
            <person name="Feng J.-D."/>
            <person name="Fong B."/>
            <person name="Fujii C.Y."/>
            <person name="Gill J.E."/>
            <person name="Goldsmith A.D."/>
            <person name="Haas B."/>
            <person name="Hansen N.F."/>
            <person name="Hughes B."/>
            <person name="Huizar L."/>
            <person name="Hunter J.L."/>
            <person name="Jenkins J."/>
            <person name="Johnson-Hopson C."/>
            <person name="Khan S."/>
            <person name="Khaykin E."/>
            <person name="Kim C.J."/>
            <person name="Koo H.L."/>
            <person name="Kremenetskaia I."/>
            <person name="Kurtz D.B."/>
            <person name="Kwan A."/>
            <person name="Lam B."/>
            <person name="Langin-Hooper S."/>
            <person name="Lee A."/>
            <person name="Lee J.M."/>
            <person name="Lenz C.A."/>
            <person name="Li J.H."/>
            <person name="Li Y.-P."/>
            <person name="Lin X."/>
            <person name="Liu S.X."/>
            <person name="Liu Z.A."/>
            <person name="Luros J.S."/>
            <person name="Maiti R."/>
            <person name="Marziali A."/>
            <person name="Militscher J."/>
            <person name="Miranda M."/>
            <person name="Nguyen M."/>
            <person name="Nierman W.C."/>
            <person name="Osborne B.I."/>
            <person name="Pai G."/>
            <person name="Peterson J."/>
            <person name="Pham P.K."/>
            <person name="Rizzo M."/>
            <person name="Rooney T."/>
            <person name="Rowley D."/>
            <person name="Sakano H."/>
            <person name="Salzberg S.L."/>
            <person name="Schwartz J.R."/>
            <person name="Shinn P."/>
            <person name="Southwick A.M."/>
            <person name="Sun H."/>
            <person name="Tallon L.J."/>
            <person name="Tambunga G."/>
            <person name="Toriumi M.J."/>
            <person name="Town C.D."/>
            <person name="Utterback T."/>
            <person name="Van Aken S."/>
            <person name="Vaysberg M."/>
            <person name="Vysotskaia V.S."/>
            <person name="Walker M."/>
            <person name="Wu D."/>
            <person name="Yu G."/>
            <person name="Fraser C.M."/>
            <person name="Venter J.C."/>
            <person name="Davis R.W."/>
        </authorList>
    </citation>
    <scope>NUCLEOTIDE SEQUENCE [LARGE SCALE GENOMIC DNA]</scope>
    <source>
        <strain>cv. Columbia</strain>
    </source>
</reference>
<reference key="3">
    <citation type="journal article" date="2017" name="Plant J.">
        <title>Araport11: a complete reannotation of the Arabidopsis thaliana reference genome.</title>
        <authorList>
            <person name="Cheng C.Y."/>
            <person name="Krishnakumar V."/>
            <person name="Chan A.P."/>
            <person name="Thibaud-Nissen F."/>
            <person name="Schobel S."/>
            <person name="Town C.D."/>
        </authorList>
    </citation>
    <scope>GENOME REANNOTATION</scope>
    <source>
        <strain>cv. Columbia</strain>
    </source>
</reference>
<reference key="4">
    <citation type="journal article" date="1996" name="Plant Physiol.">
        <title>SGR1, SGR2, SGR3: novel genetic loci involved in shoot gravitropism in Arabidopsis thaliana.</title>
        <authorList>
            <person name="Fukaki H."/>
            <person name="Fujisawa H."/>
            <person name="Tasaka M."/>
        </authorList>
    </citation>
    <scope>FUNCTION</scope>
    <scope>DISRUPTION PHENOTYPE</scope>
    <source>
        <strain>cv. Columbia</strain>
    </source>
</reference>
<reference key="5">
    <citation type="journal article" date="2002" name="J. Plant Growth Regul.">
        <title>Role of endodermal cell vacuoles in shoot gravitropism.</title>
        <authorList>
            <person name="Kato T."/>
            <person name="Morita M.T."/>
            <person name="Tasaka M."/>
        </authorList>
    </citation>
    <scope>FUNCTION</scope>
    <scope>DISRUPTION PHENOTYPE</scope>
</reference>
<reference key="6">
    <citation type="journal article" date="2002" name="Plant Cell">
        <title>Involvement of the vacuoles of the endodermis in the early process of shoot gravitropism in Arabidopsis.</title>
        <authorList>
            <person name="Morita M.T."/>
            <person name="Kato T."/>
            <person name="Nagafusa K."/>
            <person name="Saito C."/>
            <person name="Ueda T."/>
            <person name="Nakano A."/>
            <person name="Tasaka M."/>
        </authorList>
    </citation>
    <scope>FUNCTION</scope>
    <scope>DISRUPTION PHENOTYPE</scope>
    <scope>SUBCELLULAR LOCATION</scope>
    <scope>DEVELOPMENTAL STAGE</scope>
</reference>
<reference key="7">
    <citation type="journal article" date="2006" name="Plant Cell Physiol.">
        <title>Gravitropism in leaves of Arabidopsis thaliana (L.) Heynh.</title>
        <authorList>
            <person name="Mano E."/>
            <person name="Horiguchi G."/>
            <person name="Tsukaya H."/>
        </authorList>
    </citation>
    <scope>FUNCTION</scope>
    <scope>DISRUPTION PHENOTYPE</scope>
    <source>
        <strain>cv. Columbia</strain>
    </source>
</reference>
<reference key="8">
    <citation type="journal article" date="2011" name="Plant J.">
        <title>The occurrence of 'bulbs', a complex configuration of the vacuolar membrane, is affected by mutations of vacuolar SNARE and phospholipase in Arabidopsis.</title>
        <authorList>
            <person name="Saito C."/>
            <person name="Uemura T."/>
            <person name="Awai C."/>
            <person name="Tominaga M."/>
            <person name="Ebine K."/>
            <person name="Ito J."/>
            <person name="Ueda T."/>
            <person name="Abe H."/>
            <person name="Morita M.T."/>
            <person name="Tasaka M."/>
            <person name="Nakano A."/>
        </authorList>
    </citation>
    <scope>FUNCTION</scope>
    <scope>DISRUPTION PHENOTYPE</scope>
    <source>
        <strain>cv. Columbia</strain>
    </source>
</reference>
<dbReference type="EC" id="3.1.1.-"/>
<dbReference type="EMBL" id="AB073133">
    <property type="protein sequence ID" value="BAB71959.1"/>
    <property type="molecule type" value="mRNA"/>
</dbReference>
<dbReference type="EMBL" id="AC027135">
    <property type="protein sequence ID" value="AAG51263.1"/>
    <property type="status" value="ALT_SEQ"/>
    <property type="molecule type" value="Genomic_DNA"/>
</dbReference>
<dbReference type="EMBL" id="AC074360">
    <property type="protein sequence ID" value="AAG60149.1"/>
    <property type="status" value="ALT_SEQ"/>
    <property type="molecule type" value="Genomic_DNA"/>
</dbReference>
<dbReference type="EMBL" id="CP002684">
    <property type="protein sequence ID" value="AEE31360.1"/>
    <property type="molecule type" value="Genomic_DNA"/>
</dbReference>
<dbReference type="PIR" id="H86440">
    <property type="entry name" value="H86440"/>
</dbReference>
<dbReference type="RefSeq" id="NP_174433.2">
    <property type="nucleotide sequence ID" value="NM_102887.5"/>
</dbReference>
<dbReference type="SMR" id="Q8W5R2"/>
<dbReference type="FunCoup" id="Q8W5R2">
    <property type="interactions" value="3128"/>
</dbReference>
<dbReference type="STRING" id="3702.Q8W5R2"/>
<dbReference type="GlyGen" id="Q8W5R2">
    <property type="glycosylation" value="1 site"/>
</dbReference>
<dbReference type="iPTMnet" id="Q8W5R2"/>
<dbReference type="PaxDb" id="3702-AT1G31480.1"/>
<dbReference type="ProteomicsDB" id="234502"/>
<dbReference type="EnsemblPlants" id="AT1G31480.1">
    <property type="protein sequence ID" value="AT1G31480.1"/>
    <property type="gene ID" value="AT1G31480"/>
</dbReference>
<dbReference type="GeneID" id="840038"/>
<dbReference type="Gramene" id="AT1G31480.1">
    <property type="protein sequence ID" value="AT1G31480.1"/>
    <property type="gene ID" value="AT1G31480"/>
</dbReference>
<dbReference type="KEGG" id="ath:AT1G31480"/>
<dbReference type="Araport" id="AT1G31480"/>
<dbReference type="TAIR" id="AT1G31480">
    <property type="gene designation" value="SGR2"/>
</dbReference>
<dbReference type="eggNOG" id="KOG2308">
    <property type="taxonomic scope" value="Eukaryota"/>
</dbReference>
<dbReference type="HOGENOM" id="CLU_006932_1_0_1"/>
<dbReference type="InParanoid" id="Q8W5R2"/>
<dbReference type="OMA" id="WQNENIV"/>
<dbReference type="PhylomeDB" id="Q8W5R2"/>
<dbReference type="PRO" id="PR:Q8W5R2"/>
<dbReference type="Proteomes" id="UP000006548">
    <property type="component" value="Chromosome 1"/>
</dbReference>
<dbReference type="ExpressionAtlas" id="Q8W5R2">
    <property type="expression patterns" value="baseline and differential"/>
</dbReference>
<dbReference type="GO" id="GO:0009705">
    <property type="term" value="C:plant-type vacuole membrane"/>
    <property type="evidence" value="ECO:0000314"/>
    <property type="project" value="TAIR"/>
</dbReference>
<dbReference type="GO" id="GO:0009506">
    <property type="term" value="C:plasmodesma"/>
    <property type="evidence" value="ECO:0007005"/>
    <property type="project" value="TAIR"/>
</dbReference>
<dbReference type="GO" id="GO:0005773">
    <property type="term" value="C:vacuole"/>
    <property type="evidence" value="ECO:0007005"/>
    <property type="project" value="TAIR"/>
</dbReference>
<dbReference type="GO" id="GO:0046872">
    <property type="term" value="F:metal ion binding"/>
    <property type="evidence" value="ECO:0007669"/>
    <property type="project" value="InterPro"/>
</dbReference>
<dbReference type="GO" id="GO:0008970">
    <property type="term" value="F:phospholipase A1 activity"/>
    <property type="evidence" value="ECO:0000250"/>
    <property type="project" value="TAIR"/>
</dbReference>
<dbReference type="GO" id="GO:0009660">
    <property type="term" value="P:amyloplast organization"/>
    <property type="evidence" value="ECO:0000315"/>
    <property type="project" value="TAIR"/>
</dbReference>
<dbReference type="GO" id="GO:0009590">
    <property type="term" value="P:detection of gravity"/>
    <property type="evidence" value="ECO:0000315"/>
    <property type="project" value="TAIR"/>
</dbReference>
<dbReference type="GO" id="GO:0016042">
    <property type="term" value="P:lipid catabolic process"/>
    <property type="evidence" value="ECO:0007669"/>
    <property type="project" value="UniProtKB-KW"/>
</dbReference>
<dbReference type="GO" id="GO:0009959">
    <property type="term" value="P:negative gravitropism"/>
    <property type="evidence" value="ECO:0000315"/>
    <property type="project" value="TAIR"/>
</dbReference>
<dbReference type="InterPro" id="IPR029058">
    <property type="entry name" value="AB_hydrolase_fold"/>
</dbReference>
<dbReference type="InterPro" id="IPR004177">
    <property type="entry name" value="DDHD_dom"/>
</dbReference>
<dbReference type="PANTHER" id="PTHR23509:SF10">
    <property type="entry name" value="LD21067P"/>
    <property type="match status" value="1"/>
</dbReference>
<dbReference type="PANTHER" id="PTHR23509">
    <property type="entry name" value="PA-PL1 PHOSPHOLIPASE FAMILY"/>
    <property type="match status" value="1"/>
</dbReference>
<dbReference type="Pfam" id="PF02862">
    <property type="entry name" value="DDHD"/>
    <property type="match status" value="2"/>
</dbReference>
<dbReference type="SMART" id="SM01127">
    <property type="entry name" value="DDHD"/>
    <property type="match status" value="1"/>
</dbReference>
<dbReference type="SUPFAM" id="SSF53474">
    <property type="entry name" value="alpha/beta-Hydrolases"/>
    <property type="match status" value="1"/>
</dbReference>
<dbReference type="PROSITE" id="PS51043">
    <property type="entry name" value="DDHD"/>
    <property type="match status" value="1"/>
</dbReference>
<keyword id="KW-0175">Coiled coil</keyword>
<keyword id="KW-0378">Hydrolase</keyword>
<keyword id="KW-0442">Lipid degradation</keyword>
<keyword id="KW-0443">Lipid metabolism</keyword>
<keyword id="KW-0472">Membrane</keyword>
<keyword id="KW-1185">Reference proteome</keyword>
<keyword id="KW-0926">Vacuole</keyword>
<sequence>MEDRETHLGTREVNETSPDLLKNTPSNIARLEDVIEQCHGRQKYLAQTRSPSDGSDVRWYFCKVPLAENELAASVPRTDVVGKSEYFRFGMRDSLAIEASFLQREDELLSLWWKEYAECSEGPKLQVNSKKKSIETPSEASVSSSLYEVEEERVGVPVKGGLYEVDLVRRHCFPVYWNGDNRRVLRGHWFARKGGLDWLPIPETVSEQLEVAYRNKVWRRRSFQPSGLFAARIDLQGSSLGLHALFTGEDDTWEAWLNVDPSGFSGIVGYTGNGIKLRRGYAGSYSPKPTQEELRQQKEEEMDDYCSQVPVRHLVFMVHGIGQKGEKSNLVDDVGNFRQITAALAERHLTSHQLSTQRVLFIPCQWRKGLKLSGEAAVDKCTLDGVRRFREMLSATVHDVLYYMSPIYCQAIIDSVSKQLNRLYLKFLKRNPDYVGKISIYGHSLGSVLSYDILCHQHNLSSPFPMDSVYKKFFPDEESPPTPAKADKPCSSHPSSNFEPEKSDQLNNPEKITGQDNNTMAKEPTVLEHHDVIQEDPSLISDSVVANVGLERRGGQEDDHHDSSGAISSQDVPDGADCRTPDSPSCSQEQSWDKESVNSNNEERIKLLQDEVNSLRSKVAQLLSENARILSDEKAKTSVAPKELNNEKVQTEDADAPTSFTPFIKYQKLEFKVDTFFAVGSPLGVFLALRNIRLGIGKGKDYWEEENAIEEMPACRRMFNIFHPYDPVAYRVEPLVCKEYLPERPVIIPYHRGGKRLHIGLQDFREDFAARSQRIMNHFDSVRTRVLTICQSKSADNLDEMEETDDEKDDRSYGSLMIERLTGTRDGRIDHMLQEKTFEHPYLQAIGAHTNYWRDQDTALFIIKHLYRELPDGPNSPTESTEGDDSPKDSSRPHSWIDRREADYDDEELPLTFSDKQITRSFSAEAKKYLKKP</sequence>
<feature type="chain" id="PRO_0000429059" description="Phospholipase SGR2">
    <location>
        <begin position="1"/>
        <end position="933"/>
    </location>
</feature>
<feature type="domain" description="DDHD" evidence="3">
    <location>
        <begin position="669"/>
        <end position="868"/>
    </location>
</feature>
<feature type="region of interest" description="Disordered" evidence="4">
    <location>
        <begin position="1"/>
        <end position="22"/>
    </location>
</feature>
<feature type="region of interest" description="Disordered" evidence="4">
    <location>
        <begin position="475"/>
        <end position="517"/>
    </location>
</feature>
<feature type="region of interest" description="Disordered" evidence="4">
    <location>
        <begin position="553"/>
        <end position="598"/>
    </location>
</feature>
<feature type="region of interest" description="Disordered" evidence="4">
    <location>
        <begin position="871"/>
        <end position="903"/>
    </location>
</feature>
<feature type="coiled-coil region" evidence="2">
    <location>
        <begin position="593"/>
        <end position="631"/>
    </location>
</feature>
<feature type="compositionally biased region" description="Basic and acidic residues" evidence="4">
    <location>
        <begin position="1"/>
        <end position="14"/>
    </location>
</feature>
<feature type="compositionally biased region" description="Polar residues" evidence="4">
    <location>
        <begin position="505"/>
        <end position="517"/>
    </location>
</feature>
<feature type="compositionally biased region" description="Basic and acidic residues" evidence="4">
    <location>
        <begin position="553"/>
        <end position="563"/>
    </location>
</feature>
<feature type="compositionally biased region" description="Basic and acidic residues" evidence="4">
    <location>
        <begin position="885"/>
        <end position="902"/>
    </location>
</feature>
<feature type="active site" evidence="1">
    <location>
        <position position="444"/>
    </location>
</feature>
<feature type="mutagenesis site" description="In sgr2-6; altered shoot gravitropism." evidence="5">
    <original>G</original>
    <variation>S</variation>
    <location>
        <position position="320"/>
    </location>
</feature>
<feature type="mutagenesis site" description="In sgr2-3; altered shoot gravitropism." evidence="5">
    <original>G</original>
    <variation>A</variation>
    <location>
        <position position="446"/>
    </location>
</feature>
<comment type="function">
    <text evidence="5 6 7 8 9 10">Involved in vacuolar formation or function (e.g. formation of vacuolar membrane 'bulbs'). Required for amyloplast sedimentation in the endodermis during shoot gravitropism, which are thus acting as statoliths. Particularly important for the negative gravitropism leading to leaf movement observed in darkness.</text>
</comment>
<comment type="subunit">
    <text evidence="1">Forms oligomers.</text>
</comment>
<comment type="subcellular location">
    <subcellularLocation>
        <location evidence="6">Vacuole membrane</location>
    </subcellularLocation>
    <text>Detected in small organelles membranes.</text>
</comment>
<comment type="tissue specificity">
    <text evidence="5">Expressed in roots, hypocotyls, leaves, stems and floral buds, and, at low levels, in siliques.</text>
</comment>
<comment type="developmental stage">
    <text evidence="6">Expressed in young seedlings and progressively confined in the elongation zone of the root during seedlings growth.</text>
</comment>
<comment type="disruption phenotype">
    <text evidence="5 6 7 8 9 10">Abnormal amyloplast sedimentation and shoot gravitropism. Abnormal gravitropism in both inflorescence stems and hypocotyls accompanied by misshapen seeds and seedlings, including leaf movement in darkness. Reduced formation of vacuolar membrane 'bulbs'. The sgr2-1 mutant has no gravitropic response in inflorescence stems but a reduced gravitropic response in hypocotyls.</text>
</comment>
<comment type="sequence caution" evidence="11">
    <conflict type="erroneous gene model prediction">
        <sequence resource="EMBL-CDS" id="AAG51263"/>
    </conflict>
</comment>
<comment type="sequence caution" evidence="11">
    <conflict type="erroneous gene model prediction">
        <sequence resource="EMBL-CDS" id="AAG60149"/>
    </conflict>
</comment>
<evidence type="ECO:0000250" key="1"/>
<evidence type="ECO:0000255" key="2"/>
<evidence type="ECO:0000255" key="3">
    <source>
        <dbReference type="PROSITE-ProRule" id="PRU00378"/>
    </source>
</evidence>
<evidence type="ECO:0000256" key="4">
    <source>
        <dbReference type="SAM" id="MobiDB-lite"/>
    </source>
</evidence>
<evidence type="ECO:0000269" key="5">
    <source>
    </source>
</evidence>
<evidence type="ECO:0000269" key="6">
    <source>
    </source>
</evidence>
<evidence type="ECO:0000269" key="7">
    <source>
    </source>
</evidence>
<evidence type="ECO:0000269" key="8">
    <source>
    </source>
</evidence>
<evidence type="ECO:0000269" key="9">
    <source>
    </source>
</evidence>
<evidence type="ECO:0000269" key="10">
    <source>
    </source>
</evidence>
<evidence type="ECO:0000305" key="11"/>